<keyword id="KW-0507">mRNA processing</keyword>
<keyword id="KW-0508">mRNA splicing</keyword>
<keyword id="KW-0539">Nucleus</keyword>
<keyword id="KW-1185">Reference proteome</keyword>
<keyword id="KW-0747">Spliceosome</keyword>
<evidence type="ECO:0000250" key="1"/>
<evidence type="ECO:0000305" key="2"/>
<feature type="chain" id="PRO_0000218630" description="Pre-mRNA-splicing factor RSE1">
    <location>
        <begin position="1"/>
        <end position="1256"/>
    </location>
</feature>
<gene>
    <name type="primary">RSE1</name>
    <name type="ordered locus">DEHA2A08932g</name>
</gene>
<sequence>MSVDNESLYLYNLTIKHPSSCIASIVGQFLGNKKSQEIILANSTSIELWKADSNTGKLEKIYQQASFGIIQGIDKIRLVGTQKDYVVITSDSGKLVVLEFDIEKLQFVPLFQEPHSKNGLRRTSPGEYLCVDPHNRAILIGAIEKNKLVYKVQSNDEGKLELSSPLETFSKHTLTLQICAMDTGFENPMFAAIECDYNARQQDNGEEEDAGEASLLLNYYELDQGLNHVVKHKSNEKIPGSSSHLIPLPDFIGGLLVCSKSTIIYAHPSKDKLYLPIPIRSNTNETLIVNHVIHRLKKNNFFILVQSQLGDCFKITIDHDEVNESIENINITYFDTIPLSQSLNIFKSGFLFANVATNNKLFYQFEKLGDDNNNTTLQSCNFSDYNSIFELDISKRSFKVAGLENLALVDIMETLNPITDGALIETLRPEVPDPFKQLTALSSHSYLKTLTHGISTNTVVSSPLPIKPTAIHTTRIFAESANDEYLVISSTLSSQTLVLSIGEVVEEVNDSQFVTNEPTINVQQVGKSSVVQIYSNGIRHIKHTMRNDTIEKKYTDWYPPAGISIIQASTNNEQVIIGLSNREICYFEIDPHDDQLVEYQERLEMSGGSISALAISSSSISKLQRKSSYAIVGCSDETIQAISLKPHNCLEIVTLQALSANSSSIAMVPHGYSTSVHIGMENGLYVRVTIDEITGKLSDTRIQFLGSKPVQLSVIGLPQLQQNGLLAISSRPWIGYYSKGDFKMTPLLNTNISNGASFYSEDIGGEGIVGIDDNNLIILTISNTDGEESGLNVNDDFIINSVKLRYLPRKMNVDSPGDNEISSSSYIYIIESEYGITSPFPVTVLPDNQKESTNENIDTPEIDQDYYDAFGFERSRHSWASCVEVIDFNNQEIVQTIELPKNESAISLCRLQFESQQTKNQEYLIIGTTQDQKFLPNSYSNNYLYTFTINKSSNKNKSQNEILEFVHKTELDYQPTAIIPFNGRLLVGMSNFLRLYDLGQRQLLRKASSNIEYLKNIIRLTHQGGSRIVVGDSSMSTTFVKYDSTENQFIPFADDIMKRQITALVTLDYDTIIGGDKFGNIFVSRVPETISQQSDKDWSLLRYQESYLNGSGSRLKNICEFYLQDIPTSFTKGSLVMGGKESIIYTGIQGTLGLLLPLSTENEVKFLGDLQLLLRKYFDYNFDDFDKDKNGYNLLGKDHLKFRSYYNPVKNVMDGDLIERFYELSQSMKIRIGTELNRTPREIEKKISEMRHRSAF</sequence>
<organism>
    <name type="scientific">Debaryomyces hansenii (strain ATCC 36239 / CBS 767 / BCRC 21394 / JCM 1990 / NBRC 0083 / IGC 2968)</name>
    <name type="common">Yeast</name>
    <name type="synonym">Torulaspora hansenii</name>
    <dbReference type="NCBI Taxonomy" id="284592"/>
    <lineage>
        <taxon>Eukaryota</taxon>
        <taxon>Fungi</taxon>
        <taxon>Dikarya</taxon>
        <taxon>Ascomycota</taxon>
        <taxon>Saccharomycotina</taxon>
        <taxon>Pichiomycetes</taxon>
        <taxon>Debaryomycetaceae</taxon>
        <taxon>Debaryomyces</taxon>
    </lineage>
</organism>
<protein>
    <recommendedName>
        <fullName>Pre-mRNA-splicing factor RSE1</fullName>
    </recommendedName>
</protein>
<reference key="1">
    <citation type="journal article" date="2004" name="Nature">
        <title>Genome evolution in yeasts.</title>
        <authorList>
            <person name="Dujon B."/>
            <person name="Sherman D."/>
            <person name="Fischer G."/>
            <person name="Durrens P."/>
            <person name="Casaregola S."/>
            <person name="Lafontaine I."/>
            <person name="de Montigny J."/>
            <person name="Marck C."/>
            <person name="Neuveglise C."/>
            <person name="Talla E."/>
            <person name="Goffard N."/>
            <person name="Frangeul L."/>
            <person name="Aigle M."/>
            <person name="Anthouard V."/>
            <person name="Babour A."/>
            <person name="Barbe V."/>
            <person name="Barnay S."/>
            <person name="Blanchin S."/>
            <person name="Beckerich J.-M."/>
            <person name="Beyne E."/>
            <person name="Bleykasten C."/>
            <person name="Boisrame A."/>
            <person name="Boyer J."/>
            <person name="Cattolico L."/>
            <person name="Confanioleri F."/>
            <person name="de Daruvar A."/>
            <person name="Despons L."/>
            <person name="Fabre E."/>
            <person name="Fairhead C."/>
            <person name="Ferry-Dumazet H."/>
            <person name="Groppi A."/>
            <person name="Hantraye F."/>
            <person name="Hennequin C."/>
            <person name="Jauniaux N."/>
            <person name="Joyet P."/>
            <person name="Kachouri R."/>
            <person name="Kerrest A."/>
            <person name="Koszul R."/>
            <person name="Lemaire M."/>
            <person name="Lesur I."/>
            <person name="Ma L."/>
            <person name="Muller H."/>
            <person name="Nicaud J.-M."/>
            <person name="Nikolski M."/>
            <person name="Oztas S."/>
            <person name="Ozier-Kalogeropoulos O."/>
            <person name="Pellenz S."/>
            <person name="Potier S."/>
            <person name="Richard G.-F."/>
            <person name="Straub M.-L."/>
            <person name="Suleau A."/>
            <person name="Swennen D."/>
            <person name="Tekaia F."/>
            <person name="Wesolowski-Louvel M."/>
            <person name="Westhof E."/>
            <person name="Wirth B."/>
            <person name="Zeniou-Meyer M."/>
            <person name="Zivanovic Y."/>
            <person name="Bolotin-Fukuhara M."/>
            <person name="Thierry A."/>
            <person name="Bouchier C."/>
            <person name="Caudron B."/>
            <person name="Scarpelli C."/>
            <person name="Gaillardin C."/>
            <person name="Weissenbach J."/>
            <person name="Wincker P."/>
            <person name="Souciet J.-L."/>
        </authorList>
    </citation>
    <scope>NUCLEOTIDE SEQUENCE [LARGE SCALE GENOMIC DNA]</scope>
    <source>
        <strain>ATCC 36239 / CBS 767 / BCRC 21394 / JCM 1990 / NBRC 0083 / IGC 2968</strain>
    </source>
</reference>
<dbReference type="EMBL" id="CR382133">
    <property type="protein sequence ID" value="CAG84677.2"/>
    <property type="molecule type" value="Genomic_DNA"/>
</dbReference>
<dbReference type="RefSeq" id="XP_456718.2">
    <property type="nucleotide sequence ID" value="XM_456718.1"/>
</dbReference>
<dbReference type="SMR" id="Q6BYK1"/>
<dbReference type="FunCoup" id="Q6BYK1">
    <property type="interactions" value="1377"/>
</dbReference>
<dbReference type="STRING" id="284592.Q6BYK1"/>
<dbReference type="GeneID" id="2899778"/>
<dbReference type="KEGG" id="dha:DEHA2A08932g"/>
<dbReference type="eggNOG" id="KOG1898">
    <property type="taxonomic scope" value="Eukaryota"/>
</dbReference>
<dbReference type="HOGENOM" id="CLU_003246_0_1_1"/>
<dbReference type="InParanoid" id="Q6BYK1"/>
<dbReference type="OMA" id="PRATGHW"/>
<dbReference type="OrthoDB" id="436637at2759"/>
<dbReference type="Proteomes" id="UP000000599">
    <property type="component" value="Chromosome A"/>
</dbReference>
<dbReference type="GO" id="GO:0005681">
    <property type="term" value="C:spliceosomal complex"/>
    <property type="evidence" value="ECO:0007669"/>
    <property type="project" value="UniProtKB-KW"/>
</dbReference>
<dbReference type="GO" id="GO:0003676">
    <property type="term" value="F:nucleic acid binding"/>
    <property type="evidence" value="ECO:0007669"/>
    <property type="project" value="InterPro"/>
</dbReference>
<dbReference type="GO" id="GO:0006397">
    <property type="term" value="P:mRNA processing"/>
    <property type="evidence" value="ECO:0007669"/>
    <property type="project" value="UniProtKB-KW"/>
</dbReference>
<dbReference type="GO" id="GO:0008380">
    <property type="term" value="P:RNA splicing"/>
    <property type="evidence" value="ECO:0007669"/>
    <property type="project" value="UniProtKB-KW"/>
</dbReference>
<dbReference type="FunFam" id="2.130.10.10:FF:001143">
    <property type="entry name" value="Pre-mRNA-splicing factor rse-1, putative"/>
    <property type="match status" value="1"/>
</dbReference>
<dbReference type="FunFam" id="2.130.10.10:FF:000031">
    <property type="entry name" value="Splicing factor 3b subunit 3"/>
    <property type="match status" value="1"/>
</dbReference>
<dbReference type="Gene3D" id="2.130.10.10">
    <property type="entry name" value="YVTN repeat-like/Quinoprotein amine dehydrogenase"/>
    <property type="match status" value="3"/>
</dbReference>
<dbReference type="InterPro" id="IPR018846">
    <property type="entry name" value="Beta-prop_RSE1/DDB1/CPSF1_1st"/>
</dbReference>
<dbReference type="InterPro" id="IPR004871">
    <property type="entry name" value="Cleavage/polyA-sp_fac_asu_C"/>
</dbReference>
<dbReference type="InterPro" id="IPR050358">
    <property type="entry name" value="RSE1/DDB1/CFT1/CPSF1"/>
</dbReference>
<dbReference type="InterPro" id="IPR015943">
    <property type="entry name" value="WD40/YVTN_repeat-like_dom_sf"/>
</dbReference>
<dbReference type="InterPro" id="IPR036322">
    <property type="entry name" value="WD40_repeat_dom_sf"/>
</dbReference>
<dbReference type="PANTHER" id="PTHR10644">
    <property type="entry name" value="DNA REPAIR/RNA PROCESSING CPSF FAMILY"/>
    <property type="match status" value="1"/>
</dbReference>
<dbReference type="Pfam" id="PF10433">
    <property type="entry name" value="Beta-prop_RSE1_1st"/>
    <property type="match status" value="1"/>
</dbReference>
<dbReference type="Pfam" id="PF23726">
    <property type="entry name" value="Beta-prop_RSE1_2nd"/>
    <property type="match status" value="1"/>
</dbReference>
<dbReference type="Pfam" id="PF03178">
    <property type="entry name" value="CPSF_A"/>
    <property type="match status" value="1"/>
</dbReference>
<dbReference type="SUPFAM" id="SSF50978">
    <property type="entry name" value="WD40 repeat-like"/>
    <property type="match status" value="1"/>
</dbReference>
<accession>Q6BYK1</accession>
<name>RSE1_DEBHA</name>
<proteinExistence type="inferred from homology"/>
<comment type="function">
    <text evidence="1">Involved in pre-mRNA splicing and cell cycle control.</text>
</comment>
<comment type="subunit">
    <text evidence="1">Associated with the spliceosome.</text>
</comment>
<comment type="subcellular location">
    <subcellularLocation>
        <location evidence="1">Nucleus</location>
    </subcellularLocation>
</comment>
<comment type="similarity">
    <text evidence="2">Belongs to the RSE1 family.</text>
</comment>